<sequence length="297" mass="33504">MRSWNSLFCLNSSRPPGHIVYPKHQAGHTGKQADHLGSQAFYPGRQHDYLVPPAGTAGIPVQNQPGRPEGVPWMPAPPPPLNCPPGLEYLSQIDMILIHQQIELLEVLFSFESSNMYEIKNSFGQRIYFAAEDTNFCIRNCCGRSRPFTLRITDNVGREVITLERPLRCNCCCCPCCLQEIEIQAPPGVPVGYVTQTWHPCLTKFTIKNQKREDVLKISGPCIVCSCIAGVDFEITSLDEQIVVGRISKHWSGFLREAFTDADNFGIQFPRDLDVKMKAVMIGACFLIDYMFFERTR</sequence>
<evidence type="ECO:0000250" key="1">
    <source>
        <dbReference type="UniProtKB" id="O15162"/>
    </source>
</evidence>
<evidence type="ECO:0000255" key="2"/>
<evidence type="ECO:0000269" key="3">
    <source>
    </source>
</evidence>
<evidence type="ECO:0000269" key="4">
    <source>
    </source>
</evidence>
<evidence type="ECO:0000303" key="5">
    <source>
    </source>
</evidence>
<evidence type="ECO:0000303" key="6">
    <source>
    </source>
</evidence>
<evidence type="ECO:0000305" key="7"/>
<evidence type="ECO:0000305" key="8">
    <source>
    </source>
</evidence>
<evidence type="ECO:0000312" key="9">
    <source>
        <dbReference type="HGNC" id="HGNC:16494"/>
    </source>
</evidence>
<name>PLS2_HUMAN</name>
<accession>Q9NRY7</accession>
<accession>B4DXC3</accession>
<accession>J3KR76</accession>
<accession>Q0VAQ1</accession>
<accession>Q6NSW9</accession>
<accession>Q7Z4L7</accession>
<feature type="chain" id="PRO_0000100787" description="Phospholipid scramblase 2">
    <location>
        <begin position="1"/>
        <end position="297"/>
    </location>
</feature>
<feature type="topological domain" description="Cytoplasmic" evidence="1">
    <location>
        <begin position="1"/>
        <end position="276"/>
    </location>
</feature>
<feature type="transmembrane region" description="Helical" evidence="2">
    <location>
        <begin position="277"/>
        <end position="293"/>
    </location>
</feature>
<feature type="topological domain" description="Extracellular" evidence="1">
    <location>
        <begin position="294"/>
        <end position="297"/>
    </location>
</feature>
<feature type="region of interest" description="Proline-rich domain (PRD)" evidence="1">
    <location>
        <begin position="1"/>
        <end position="72"/>
    </location>
</feature>
<feature type="modified residue" description="Phosphothreonine; by PKC" evidence="1">
    <location>
        <position position="149"/>
    </location>
</feature>
<feature type="lipid moiety-binding region" description="S-palmitoyl cysteine" evidence="1">
    <location>
        <position position="172"/>
    </location>
</feature>
<feature type="lipid moiety-binding region" description="S-palmitoyl cysteine" evidence="1">
    <location>
        <position position="173"/>
    </location>
</feature>
<feature type="lipid moiety-binding region" description="S-palmitoyl cysteine" evidence="1">
    <location>
        <position position="174"/>
    </location>
</feature>
<feature type="lipid moiety-binding region" description="S-palmitoyl cysteine" evidence="1">
    <location>
        <position position="176"/>
    </location>
</feature>
<feature type="lipid moiety-binding region" description="S-palmitoyl cysteine" evidence="1">
    <location>
        <position position="177"/>
    </location>
</feature>
<feature type="splice variant" id="VSP_055239" description="In isoform 1." evidence="5 6">
    <location>
        <begin position="1"/>
        <end position="73"/>
    </location>
</feature>
<feature type="splice variant" id="VSP_055240" description="In isoform 3." evidence="6">
    <original>MRSWNSLFCLNSSR</original>
    <variation>MKPFQIHLPG</variation>
    <location>
        <begin position="1"/>
        <end position="14"/>
    </location>
</feature>
<feature type="sequence conflict" description="In Ref. 2; BAG63335." evidence="7" ref="2">
    <original>DLD</original>
    <variation>NLN</variation>
    <location>
        <begin position="272"/>
        <end position="274"/>
    </location>
</feature>
<organism>
    <name type="scientific">Homo sapiens</name>
    <name type="common">Human</name>
    <dbReference type="NCBI Taxonomy" id="9606"/>
    <lineage>
        <taxon>Eukaryota</taxon>
        <taxon>Metazoa</taxon>
        <taxon>Chordata</taxon>
        <taxon>Craniata</taxon>
        <taxon>Vertebrata</taxon>
        <taxon>Euteleostomi</taxon>
        <taxon>Mammalia</taxon>
        <taxon>Eutheria</taxon>
        <taxon>Euarchontoglires</taxon>
        <taxon>Primates</taxon>
        <taxon>Haplorrhini</taxon>
        <taxon>Catarrhini</taxon>
        <taxon>Hominidae</taxon>
        <taxon>Homo</taxon>
    </lineage>
</organism>
<comment type="function">
    <text evidence="8">May catalyze calcium-induced ATP-independent rapid bidirectional and non-specific movement of phospholipids (lipid scrambling or lipid flip-flop) between the inner and outer leaflet of the plasma membrane.</text>
</comment>
<comment type="function">
    <molecule>Isoform 1</molecule>
    <text evidence="4">Has no phospholipid scramblase activity, due to the lack of a N-terminal proline-rich domain.</text>
</comment>
<comment type="catalytic activity">
    <reaction evidence="8">
        <text>a 1,2-diacyl-sn-glycero-3-phosphocholine(in) = a 1,2-diacyl-sn-glycero-3-phosphocholine(out)</text>
        <dbReference type="Rhea" id="RHEA:38571"/>
        <dbReference type="ChEBI" id="CHEBI:57643"/>
    </reaction>
</comment>
<comment type="cofactor">
    <cofactor evidence="8">
        <name>Ca(2+)</name>
        <dbReference type="ChEBI" id="CHEBI:29108"/>
    </cofactor>
</comment>
<comment type="interaction">
    <interactant intactId="EBI-3937430">
        <id>Q9NRY7</id>
    </interactant>
    <interactant intactId="EBI-745213">
        <id>P29972</id>
        <label>AQP1</label>
    </interactant>
    <organismsDiffer>false</organismsDiffer>
    <experiments>3</experiments>
</comment>
<comment type="interaction">
    <interactant intactId="EBI-3937430">
        <id>Q9NRY7</id>
    </interactant>
    <interactant intactId="EBI-7996695">
        <id>Q8WZ55</id>
        <label>BSND</label>
    </interactant>
    <organismsDiffer>false</organismsDiffer>
    <experiments>3</experiments>
</comment>
<comment type="interaction">
    <interactant intactId="EBI-3937430">
        <id>Q9NRY7</id>
    </interactant>
    <interactant intactId="EBI-724524">
        <id>O75208</id>
        <label>COQ9</label>
    </interactant>
    <organismsDiffer>false</organismsDiffer>
    <experiments>3</experiments>
</comment>
<comment type="interaction">
    <interactant intactId="EBI-3937430">
        <id>Q9NRY7</id>
    </interactant>
    <interactant intactId="EBI-12006844">
        <id>A6H8Z2</id>
        <label>FAM221B</label>
    </interactant>
    <organismsDiffer>false</organismsDiffer>
    <experiments>3</experiments>
</comment>
<comment type="interaction">
    <interactant intactId="EBI-3937430">
        <id>Q9NRY7</id>
    </interactant>
    <interactant intactId="EBI-11427343">
        <id>Q9P2W3</id>
        <label>GNG13</label>
    </interactant>
    <organismsDiffer>false</organismsDiffer>
    <experiments>3</experiments>
</comment>
<comment type="interaction">
    <interactant intactId="EBI-3937430">
        <id>Q9NRY7</id>
    </interactant>
    <interactant intactId="EBI-740785">
        <id>P49639</id>
        <label>HOXA1</label>
    </interactant>
    <organismsDiffer>false</organismsDiffer>
    <experiments>3</experiments>
</comment>
<comment type="interaction">
    <interactant intactId="EBI-3937430">
        <id>Q9NRY7</id>
    </interactant>
    <interactant intactId="EBI-11962058">
        <id>Q5T7P2</id>
        <label>LCE1A</label>
    </interactant>
    <organismsDiffer>false</organismsDiffer>
    <experiments>3</experiments>
</comment>
<comment type="interaction">
    <interactant intactId="EBI-3937430">
        <id>Q9NRY7</id>
    </interactant>
    <interactant intactId="EBI-9394625">
        <id>Q5TA76</id>
        <label>LCE3A</label>
    </interactant>
    <organismsDiffer>false</organismsDiffer>
    <experiments>3</experiments>
</comment>
<comment type="interaction">
    <interactant intactId="EBI-3937430">
        <id>Q9NRY7</id>
    </interactant>
    <interactant intactId="EBI-10245456">
        <id>Q5T5B0</id>
        <label>LCE3E</label>
    </interactant>
    <organismsDiffer>false</organismsDiffer>
    <experiments>3</experiments>
</comment>
<comment type="interaction">
    <interactant intactId="EBI-3937430">
        <id>Q9NRY7</id>
    </interactant>
    <interactant intactId="EBI-11955689">
        <id>Q5TCM9</id>
        <label>LCE5A</label>
    </interactant>
    <organismsDiffer>false</organismsDiffer>
    <experiments>3</experiments>
</comment>
<comment type="interaction">
    <interactant intactId="EBI-3937430">
        <id>Q9NRY7</id>
    </interactant>
    <interactant intactId="EBI-18973558">
        <id>Q8N2G4-2</id>
        <label>LYPD1</label>
    </interactant>
    <organismsDiffer>false</organismsDiffer>
    <experiments>3</experiments>
</comment>
<comment type="interaction">
    <interactant intactId="EBI-3937430">
        <id>Q9NRY7</id>
    </interactant>
    <interactant intactId="EBI-740446">
        <id>P32242</id>
        <label>OTX1</label>
    </interactant>
    <organismsDiffer>false</organismsDiffer>
    <experiments>3</experiments>
</comment>
<comment type="interaction">
    <interactant intactId="EBI-3937430">
        <id>Q9NRY7</id>
    </interactant>
    <interactant intactId="EBI-17236143">
        <id>Q12837</id>
        <label>POU4F2</label>
    </interactant>
    <organismsDiffer>false</organismsDiffer>
    <experiments>5</experiments>
</comment>
<comment type="subcellular location">
    <subcellularLocation>
        <location evidence="1">Membrane</location>
        <topology evidence="1">Single-pass type II membrane protein</topology>
    </subcellularLocation>
</comment>
<comment type="subcellular location">
    <molecule>Isoform 1</molecule>
    <subcellularLocation>
        <location evidence="4">Nucleus</location>
    </subcellularLocation>
</comment>
<comment type="alternative products">
    <event type="alternative splicing"/>
    <isoform>
        <id>Q9NRY7-2</id>
        <name>2</name>
        <sequence type="displayed"/>
    </isoform>
    <isoform>
        <id>Q9NRY7-1</id>
        <name>1</name>
        <sequence type="described" ref="VSP_055239"/>
    </isoform>
    <isoform>
        <id>Q9NRY7-3</id>
        <name>3</name>
        <sequence type="described" ref="VSP_055240"/>
    </isoform>
</comment>
<comment type="tissue specificity">
    <text evidence="3">Expression of isoform 1 seems restricted to testis.</text>
</comment>
<comment type="domain">
    <text evidence="4">The N-terminal proline-rich domain (PRD) is required for phospholipid scramblase activity.</text>
</comment>
<comment type="similarity">
    <text evidence="7">Belongs to the phospholipid scramblase family.</text>
</comment>
<comment type="sequence caution" evidence="7">
    <conflict type="erroneous initiation">
        <sequence resource="EMBL-CDS" id="AAH55415"/>
    </conflict>
    <text>Extended N-terminus.</text>
</comment>
<comment type="online information" name="Wikipedia">
    <link uri="https://en.wikipedia.org/wiki/Scramblase"/>
    <text>Scramblase entry</text>
</comment>
<proteinExistence type="evidence at protein level"/>
<protein>
    <recommendedName>
        <fullName evidence="7">Phospholipid scramblase 2</fullName>
        <shortName>PL scramblase 2</shortName>
    </recommendedName>
    <alternativeName>
        <fullName>Ca(2+)-dependent phospholipid scramblase 2</fullName>
    </alternativeName>
</protein>
<keyword id="KW-0025">Alternative splicing</keyword>
<keyword id="KW-0106">Calcium</keyword>
<keyword id="KW-0449">Lipoprotein</keyword>
<keyword id="KW-0472">Membrane</keyword>
<keyword id="KW-0479">Metal-binding</keyword>
<keyword id="KW-0539">Nucleus</keyword>
<keyword id="KW-0564">Palmitate</keyword>
<keyword id="KW-0597">Phosphoprotein</keyword>
<keyword id="KW-1267">Proteomics identification</keyword>
<keyword id="KW-1185">Reference proteome</keyword>
<keyword id="KW-0812">Transmembrane</keyword>
<keyword id="KW-1133">Transmembrane helix</keyword>
<reference key="1">
    <citation type="journal article" date="2000" name="Biochim. Biophys. Acta">
        <title>Identification of three new members of the phospholipid scramblase gene family.</title>
        <authorList>
            <person name="Wiedmer T."/>
            <person name="Zhou Q."/>
            <person name="Kwoh D.Y."/>
            <person name="Sims P.J."/>
        </authorList>
    </citation>
    <scope>NUCLEOTIDE SEQUENCE [MRNA] (ISOFORM 1)</scope>
    <scope>CALCIUM-BINDING</scope>
    <scope>TISSUE SPECIFICITY</scope>
</reference>
<reference key="2">
    <citation type="journal article" date="2004" name="Nat. Genet.">
        <title>Complete sequencing and characterization of 21,243 full-length human cDNAs.</title>
        <authorList>
            <person name="Ota T."/>
            <person name="Suzuki Y."/>
            <person name="Nishikawa T."/>
            <person name="Otsuki T."/>
            <person name="Sugiyama T."/>
            <person name="Irie R."/>
            <person name="Wakamatsu A."/>
            <person name="Hayashi K."/>
            <person name="Sato H."/>
            <person name="Nagai K."/>
            <person name="Kimura K."/>
            <person name="Makita H."/>
            <person name="Sekine M."/>
            <person name="Obayashi M."/>
            <person name="Nishi T."/>
            <person name="Shibahara T."/>
            <person name="Tanaka T."/>
            <person name="Ishii S."/>
            <person name="Yamamoto J."/>
            <person name="Saito K."/>
            <person name="Kawai Y."/>
            <person name="Isono Y."/>
            <person name="Nakamura Y."/>
            <person name="Nagahari K."/>
            <person name="Murakami K."/>
            <person name="Yasuda T."/>
            <person name="Iwayanagi T."/>
            <person name="Wagatsuma M."/>
            <person name="Shiratori A."/>
            <person name="Sudo H."/>
            <person name="Hosoiri T."/>
            <person name="Kaku Y."/>
            <person name="Kodaira H."/>
            <person name="Kondo H."/>
            <person name="Sugawara M."/>
            <person name="Takahashi M."/>
            <person name="Kanda K."/>
            <person name="Yokoi T."/>
            <person name="Furuya T."/>
            <person name="Kikkawa E."/>
            <person name="Omura Y."/>
            <person name="Abe K."/>
            <person name="Kamihara K."/>
            <person name="Katsuta N."/>
            <person name="Sato K."/>
            <person name="Tanikawa M."/>
            <person name="Yamazaki M."/>
            <person name="Ninomiya K."/>
            <person name="Ishibashi T."/>
            <person name="Yamashita H."/>
            <person name="Murakawa K."/>
            <person name="Fujimori K."/>
            <person name="Tanai H."/>
            <person name="Kimata M."/>
            <person name="Watanabe M."/>
            <person name="Hiraoka S."/>
            <person name="Chiba Y."/>
            <person name="Ishida S."/>
            <person name="Ono Y."/>
            <person name="Takiguchi S."/>
            <person name="Watanabe S."/>
            <person name="Yosida M."/>
            <person name="Hotuta T."/>
            <person name="Kusano J."/>
            <person name="Kanehori K."/>
            <person name="Takahashi-Fujii A."/>
            <person name="Hara H."/>
            <person name="Tanase T.-O."/>
            <person name="Nomura Y."/>
            <person name="Togiya S."/>
            <person name="Komai F."/>
            <person name="Hara R."/>
            <person name="Takeuchi K."/>
            <person name="Arita M."/>
            <person name="Imose N."/>
            <person name="Musashino K."/>
            <person name="Yuuki H."/>
            <person name="Oshima A."/>
            <person name="Sasaki N."/>
            <person name="Aotsuka S."/>
            <person name="Yoshikawa Y."/>
            <person name="Matsunawa H."/>
            <person name="Ichihara T."/>
            <person name="Shiohata N."/>
            <person name="Sano S."/>
            <person name="Moriya S."/>
            <person name="Momiyama H."/>
            <person name="Satoh N."/>
            <person name="Takami S."/>
            <person name="Terashima Y."/>
            <person name="Suzuki O."/>
            <person name="Nakagawa S."/>
            <person name="Senoh A."/>
            <person name="Mizoguchi H."/>
            <person name="Goto Y."/>
            <person name="Shimizu F."/>
            <person name="Wakebe H."/>
            <person name="Hishigaki H."/>
            <person name="Watanabe T."/>
            <person name="Sugiyama A."/>
            <person name="Takemoto M."/>
            <person name="Kawakami B."/>
            <person name="Yamazaki M."/>
            <person name="Watanabe K."/>
            <person name="Kumagai A."/>
            <person name="Itakura S."/>
            <person name="Fukuzumi Y."/>
            <person name="Fujimori Y."/>
            <person name="Komiyama M."/>
            <person name="Tashiro H."/>
            <person name="Tanigami A."/>
            <person name="Fujiwara T."/>
            <person name="Ono T."/>
            <person name="Yamada K."/>
            <person name="Fujii Y."/>
            <person name="Ozaki K."/>
            <person name="Hirao M."/>
            <person name="Ohmori Y."/>
            <person name="Kawabata A."/>
            <person name="Hikiji T."/>
            <person name="Kobatake N."/>
            <person name="Inagaki H."/>
            <person name="Ikema Y."/>
            <person name="Okamoto S."/>
            <person name="Okitani R."/>
            <person name="Kawakami T."/>
            <person name="Noguchi S."/>
            <person name="Itoh T."/>
            <person name="Shigeta K."/>
            <person name="Senba T."/>
            <person name="Matsumura K."/>
            <person name="Nakajima Y."/>
            <person name="Mizuno T."/>
            <person name="Morinaga M."/>
            <person name="Sasaki M."/>
            <person name="Togashi T."/>
            <person name="Oyama M."/>
            <person name="Hata H."/>
            <person name="Watanabe M."/>
            <person name="Komatsu T."/>
            <person name="Mizushima-Sugano J."/>
            <person name="Satoh T."/>
            <person name="Shirai Y."/>
            <person name="Takahashi Y."/>
            <person name="Nakagawa K."/>
            <person name="Okumura K."/>
            <person name="Nagase T."/>
            <person name="Nomura N."/>
            <person name="Kikuchi H."/>
            <person name="Masuho Y."/>
            <person name="Yamashita R."/>
            <person name="Nakai K."/>
            <person name="Yada T."/>
            <person name="Nakamura Y."/>
            <person name="Ohara O."/>
            <person name="Isogai T."/>
            <person name="Sugano S."/>
        </authorList>
    </citation>
    <scope>NUCLEOTIDE SEQUENCE [LARGE SCALE MRNA] (ISOFORM 2)</scope>
    <source>
        <tissue>Testis</tissue>
    </source>
</reference>
<reference key="3">
    <citation type="journal article" date="2006" name="Nature">
        <title>The DNA sequence, annotation and analysis of human chromosome 3.</title>
        <authorList>
            <person name="Muzny D.M."/>
            <person name="Scherer S.E."/>
            <person name="Kaul R."/>
            <person name="Wang J."/>
            <person name="Yu J."/>
            <person name="Sudbrak R."/>
            <person name="Buhay C.J."/>
            <person name="Chen R."/>
            <person name="Cree A."/>
            <person name="Ding Y."/>
            <person name="Dugan-Rocha S."/>
            <person name="Gill R."/>
            <person name="Gunaratne P."/>
            <person name="Harris R.A."/>
            <person name="Hawes A.C."/>
            <person name="Hernandez J."/>
            <person name="Hodgson A.V."/>
            <person name="Hume J."/>
            <person name="Jackson A."/>
            <person name="Khan Z.M."/>
            <person name="Kovar-Smith C."/>
            <person name="Lewis L.R."/>
            <person name="Lozado R.J."/>
            <person name="Metzker M.L."/>
            <person name="Milosavljevic A."/>
            <person name="Miner G.R."/>
            <person name="Morgan M.B."/>
            <person name="Nazareth L.V."/>
            <person name="Scott G."/>
            <person name="Sodergren E."/>
            <person name="Song X.-Z."/>
            <person name="Steffen D."/>
            <person name="Wei S."/>
            <person name="Wheeler D.A."/>
            <person name="Wright M.W."/>
            <person name="Worley K.C."/>
            <person name="Yuan Y."/>
            <person name="Zhang Z."/>
            <person name="Adams C.Q."/>
            <person name="Ansari-Lari M.A."/>
            <person name="Ayele M."/>
            <person name="Brown M.J."/>
            <person name="Chen G."/>
            <person name="Chen Z."/>
            <person name="Clendenning J."/>
            <person name="Clerc-Blankenburg K.P."/>
            <person name="Chen R."/>
            <person name="Chen Z."/>
            <person name="Davis C."/>
            <person name="Delgado O."/>
            <person name="Dinh H.H."/>
            <person name="Dong W."/>
            <person name="Draper H."/>
            <person name="Ernst S."/>
            <person name="Fu G."/>
            <person name="Gonzalez-Garay M.L."/>
            <person name="Garcia D.K."/>
            <person name="Gillett W."/>
            <person name="Gu J."/>
            <person name="Hao B."/>
            <person name="Haugen E."/>
            <person name="Havlak P."/>
            <person name="He X."/>
            <person name="Hennig S."/>
            <person name="Hu S."/>
            <person name="Huang W."/>
            <person name="Jackson L.R."/>
            <person name="Jacob L.S."/>
            <person name="Kelly S.H."/>
            <person name="Kube M."/>
            <person name="Levy R."/>
            <person name="Li Z."/>
            <person name="Liu B."/>
            <person name="Liu J."/>
            <person name="Liu W."/>
            <person name="Lu J."/>
            <person name="Maheshwari M."/>
            <person name="Nguyen B.-V."/>
            <person name="Okwuonu G.O."/>
            <person name="Palmeiri A."/>
            <person name="Pasternak S."/>
            <person name="Perez L.M."/>
            <person name="Phelps K.A."/>
            <person name="Plopper F.J."/>
            <person name="Qiang B."/>
            <person name="Raymond C."/>
            <person name="Rodriguez R."/>
            <person name="Saenphimmachak C."/>
            <person name="Santibanez J."/>
            <person name="Shen H."/>
            <person name="Shen Y."/>
            <person name="Subramanian S."/>
            <person name="Tabor P.E."/>
            <person name="Verduzco D."/>
            <person name="Waldron L."/>
            <person name="Wang J."/>
            <person name="Wang J."/>
            <person name="Wang Q."/>
            <person name="Williams G.A."/>
            <person name="Wong G.K.-S."/>
            <person name="Yao Z."/>
            <person name="Zhang J."/>
            <person name="Zhang X."/>
            <person name="Zhao G."/>
            <person name="Zhou J."/>
            <person name="Zhou Y."/>
            <person name="Nelson D."/>
            <person name="Lehrach H."/>
            <person name="Reinhardt R."/>
            <person name="Naylor S.L."/>
            <person name="Yang H."/>
            <person name="Olson M."/>
            <person name="Weinstock G."/>
            <person name="Gibbs R.A."/>
        </authorList>
    </citation>
    <scope>NUCLEOTIDE SEQUENCE [LARGE SCALE GENOMIC DNA]</scope>
</reference>
<reference key="4">
    <citation type="journal article" date="2004" name="Genome Res.">
        <title>The status, quality, and expansion of the NIH full-length cDNA project: the Mammalian Gene Collection (MGC).</title>
        <authorList>
            <consortium name="The MGC Project Team"/>
        </authorList>
    </citation>
    <scope>NUCLEOTIDE SEQUENCE [LARGE SCALE MRNA] (ISOFORMS 1 AND 3)</scope>
    <source>
        <tissue>Testis</tissue>
    </source>
</reference>
<reference key="5">
    <citation type="journal article" date="2014" name="J. Biol. Chem.">
        <title>N-terminal proline-rich domain is required for scrambling activity of human phospholipid scramblases.</title>
        <authorList>
            <person name="Rayala S."/>
            <person name="Francis V.G."/>
            <person name="Sivagnanam U."/>
            <person name="Gummadi S.N."/>
        </authorList>
    </citation>
    <scope>FUNCTION (ISOFORM 1)</scope>
    <scope>ABSENCE OF SCRAMBLASE ACTIVITY (ISOFORM 1)</scope>
    <scope>CALCIUM-BINDING</scope>
    <scope>SUBCELLULAR LOCATION (ISOFORM 1)</scope>
    <scope>DOMAIN</scope>
    <scope>FUNCTION</scope>
    <scope>TRANSPORTER ACTIVITY</scope>
</reference>
<dbReference type="EMBL" id="AF159441">
    <property type="protein sequence ID" value="AAF91082.1"/>
    <property type="molecule type" value="mRNA"/>
</dbReference>
<dbReference type="EMBL" id="AK301909">
    <property type="protein sequence ID" value="BAG63335.1"/>
    <property type="molecule type" value="mRNA"/>
</dbReference>
<dbReference type="EMBL" id="AC069528">
    <property type="status" value="NOT_ANNOTATED_CDS"/>
    <property type="molecule type" value="Genomic_DNA"/>
</dbReference>
<dbReference type="EMBL" id="BC055415">
    <property type="protein sequence ID" value="AAH55415.1"/>
    <property type="status" value="ALT_INIT"/>
    <property type="molecule type" value="mRNA"/>
</dbReference>
<dbReference type="EMBL" id="BC069785">
    <property type="protein sequence ID" value="AAH69785.2"/>
    <property type="molecule type" value="mRNA"/>
</dbReference>
<dbReference type="EMBL" id="BC120969">
    <property type="protein sequence ID" value="AAI20970.1"/>
    <property type="molecule type" value="mRNA"/>
</dbReference>
<dbReference type="EMBL" id="BC141969">
    <property type="protein sequence ID" value="AAI41970.1"/>
    <property type="molecule type" value="mRNA"/>
</dbReference>
<dbReference type="CCDS" id="CCDS3134.1">
    <molecule id="Q9NRY7-1"/>
</dbReference>
<dbReference type="CCDS" id="CCDS56284.1">
    <molecule id="Q9NRY7-2"/>
</dbReference>
<dbReference type="CCDS" id="CCDS75029.1">
    <molecule id="Q9NRY7-3"/>
</dbReference>
<dbReference type="RefSeq" id="NP_001186907.1">
    <molecule id="Q9NRY7-2"/>
    <property type="nucleotide sequence ID" value="NM_001199978.3"/>
</dbReference>
<dbReference type="RefSeq" id="NP_001186908.1">
    <molecule id="Q9NRY7-3"/>
    <property type="nucleotide sequence ID" value="NM_001199979.1"/>
</dbReference>
<dbReference type="RefSeq" id="NP_001382366.1">
    <molecule id="Q9NRY7-1"/>
    <property type="nucleotide sequence ID" value="NM_001395437.1"/>
</dbReference>
<dbReference type="RefSeq" id="NP_001382367.1">
    <molecule id="Q9NRY7-1"/>
    <property type="nucleotide sequence ID" value="NM_001395438.1"/>
</dbReference>
<dbReference type="RefSeq" id="NP_001382368.1">
    <molecule id="Q9NRY7-1"/>
    <property type="nucleotide sequence ID" value="NM_001395439.1"/>
</dbReference>
<dbReference type="RefSeq" id="NP_001382369.1">
    <molecule id="Q9NRY7-2"/>
    <property type="nucleotide sequence ID" value="NM_001395440.1"/>
</dbReference>
<dbReference type="RefSeq" id="NP_065092.1">
    <molecule id="Q9NRY7-1"/>
    <property type="nucleotide sequence ID" value="NM_020359.4"/>
</dbReference>
<dbReference type="RefSeq" id="XP_011511324.3">
    <molecule id="Q9NRY7-3"/>
    <property type="nucleotide sequence ID" value="XM_011513022.4"/>
</dbReference>
<dbReference type="RefSeq" id="XP_011511325.3">
    <molecule id="Q9NRY7-3"/>
    <property type="nucleotide sequence ID" value="XM_011513023.4"/>
</dbReference>
<dbReference type="RefSeq" id="XP_016862392.2">
    <molecule id="Q9NRY7-3"/>
    <property type="nucleotide sequence ID" value="XM_017006903.3"/>
</dbReference>
<dbReference type="RefSeq" id="XP_016862394.1">
    <property type="nucleotide sequence ID" value="XM_017006905.1"/>
</dbReference>
<dbReference type="RefSeq" id="XP_016862395.1">
    <property type="nucleotide sequence ID" value="XM_017006906.1"/>
</dbReference>
<dbReference type="RefSeq" id="XP_016862396.1">
    <property type="nucleotide sequence ID" value="XM_017006907.1"/>
</dbReference>
<dbReference type="RefSeq" id="XP_016862397.1">
    <property type="nucleotide sequence ID" value="XM_017006908.1"/>
</dbReference>
<dbReference type="RefSeq" id="XP_016862398.1">
    <property type="nucleotide sequence ID" value="XM_017006909.1"/>
</dbReference>
<dbReference type="RefSeq" id="XP_016862399.1">
    <property type="nucleotide sequence ID" value="XM_017006910.1"/>
</dbReference>
<dbReference type="RefSeq" id="XP_016862400.1">
    <molecule id="Q9NRY7-1"/>
    <property type="nucleotide sequence ID" value="XM_017006911.2"/>
</dbReference>
<dbReference type="RefSeq" id="XP_016862403.1">
    <property type="nucleotide sequence ID" value="XM_017006914.1"/>
</dbReference>
<dbReference type="RefSeq" id="XP_016862404.1">
    <property type="nucleotide sequence ID" value="XM_017006915.1"/>
</dbReference>
<dbReference type="RefSeq" id="XP_024309438.1">
    <molecule id="Q9NRY7-2"/>
    <property type="nucleotide sequence ID" value="XM_024453670.2"/>
</dbReference>
<dbReference type="RefSeq" id="XP_024309439.1">
    <molecule id="Q9NRY7-2"/>
    <property type="nucleotide sequence ID" value="XM_024453671.2"/>
</dbReference>
<dbReference type="RefSeq" id="XP_024309440.1">
    <molecule id="Q9NRY7-2"/>
    <property type="nucleotide sequence ID" value="XM_024453672.2"/>
</dbReference>
<dbReference type="RefSeq" id="XP_024309441.1">
    <molecule id="Q9NRY7-2"/>
    <property type="nucleotide sequence ID" value="XM_024453673.2"/>
</dbReference>
<dbReference type="RefSeq" id="XP_024309442.1">
    <molecule id="Q9NRY7-2"/>
    <property type="nucleotide sequence ID" value="XM_024453674.2"/>
</dbReference>
<dbReference type="RefSeq" id="XP_047304564.1">
    <molecule id="Q9NRY7-1"/>
    <property type="nucleotide sequence ID" value="XM_047448608.1"/>
</dbReference>
<dbReference type="RefSeq" id="XP_047304565.1">
    <molecule id="Q9NRY7-1"/>
    <property type="nucleotide sequence ID" value="XM_047448609.1"/>
</dbReference>
<dbReference type="RefSeq" id="XP_047304566.1">
    <molecule id="Q9NRY7-1"/>
    <property type="nucleotide sequence ID" value="XM_047448610.1"/>
</dbReference>
<dbReference type="RefSeq" id="XP_047304567.1">
    <molecule id="Q9NRY7-1"/>
    <property type="nucleotide sequence ID" value="XM_047448611.1"/>
</dbReference>
<dbReference type="RefSeq" id="XP_054203293.1">
    <molecule id="Q9NRY7-3"/>
    <property type="nucleotide sequence ID" value="XM_054347318.1"/>
</dbReference>
<dbReference type="RefSeq" id="XP_054203294.1">
    <molecule id="Q9NRY7-3"/>
    <property type="nucleotide sequence ID" value="XM_054347319.1"/>
</dbReference>
<dbReference type="RefSeq" id="XP_054203295.1">
    <molecule id="Q9NRY7-3"/>
    <property type="nucleotide sequence ID" value="XM_054347320.1"/>
</dbReference>
<dbReference type="RefSeq" id="XP_054203296.1">
    <molecule id="Q9NRY7-2"/>
    <property type="nucleotide sequence ID" value="XM_054347321.1"/>
</dbReference>
<dbReference type="RefSeq" id="XP_054203297.1">
    <molecule id="Q9NRY7-2"/>
    <property type="nucleotide sequence ID" value="XM_054347322.1"/>
</dbReference>
<dbReference type="RefSeq" id="XP_054203298.1">
    <molecule id="Q9NRY7-2"/>
    <property type="nucleotide sequence ID" value="XM_054347323.1"/>
</dbReference>
<dbReference type="RefSeq" id="XP_054203299.1">
    <molecule id="Q9NRY7-2"/>
    <property type="nucleotide sequence ID" value="XM_054347324.1"/>
</dbReference>
<dbReference type="RefSeq" id="XP_054203300.1">
    <molecule id="Q9NRY7-2"/>
    <property type="nucleotide sequence ID" value="XM_054347325.1"/>
</dbReference>
<dbReference type="RefSeq" id="XP_054203301.1">
    <molecule id="Q9NRY7-1"/>
    <property type="nucleotide sequence ID" value="XM_054347326.1"/>
</dbReference>
<dbReference type="RefSeq" id="XP_054203302.1">
    <molecule id="Q9NRY7-1"/>
    <property type="nucleotide sequence ID" value="XM_054347327.1"/>
</dbReference>
<dbReference type="RefSeq" id="XP_054203303.1">
    <molecule id="Q9NRY7-1"/>
    <property type="nucleotide sequence ID" value="XM_054347328.1"/>
</dbReference>
<dbReference type="RefSeq" id="XP_054203304.1">
    <molecule id="Q9NRY7-1"/>
    <property type="nucleotide sequence ID" value="XM_054347329.1"/>
</dbReference>
<dbReference type="RefSeq" id="XP_054203305.1">
    <molecule id="Q9NRY7-1"/>
    <property type="nucleotide sequence ID" value="XM_054347330.1"/>
</dbReference>
<dbReference type="BioGRID" id="121340">
    <property type="interactions" value="15"/>
</dbReference>
<dbReference type="FunCoup" id="Q9NRY7">
    <property type="interactions" value="695"/>
</dbReference>
<dbReference type="IntAct" id="Q9NRY7">
    <property type="interactions" value="14"/>
</dbReference>
<dbReference type="TCDB" id="9.A.36.1.5">
    <property type="family name" value="the ca(2+)-dependent phospholipid scramblase (scramblase) family"/>
</dbReference>
<dbReference type="iPTMnet" id="Q9NRY7"/>
<dbReference type="PhosphoSitePlus" id="Q9NRY7"/>
<dbReference type="BioMuta" id="PLSCR2"/>
<dbReference type="jPOST" id="Q9NRY7"/>
<dbReference type="MassIVE" id="Q9NRY7"/>
<dbReference type="PaxDb" id="9606-ENSP00000420132"/>
<dbReference type="PeptideAtlas" id="Q9NRY7"/>
<dbReference type="ProteomicsDB" id="82445">
    <molecule id="Q9NRY7-2"/>
</dbReference>
<dbReference type="Antibodypedia" id="52901">
    <property type="antibodies" value="32 antibodies from 13 providers"/>
</dbReference>
<dbReference type="DNASU" id="57047"/>
<dbReference type="Ensembl" id="ENST00000336685.6">
    <molecule id="Q9NRY7-1"/>
    <property type="protein sequence ID" value="ENSP00000338707.2"/>
    <property type="gene ID" value="ENSG00000163746.13"/>
</dbReference>
<dbReference type="Ensembl" id="ENST00000497985.5">
    <molecule id="Q9NRY7-2"/>
    <property type="protein sequence ID" value="ENSP00000420132.1"/>
    <property type="gene ID" value="ENSG00000163746.13"/>
</dbReference>
<dbReference type="Ensembl" id="ENST00000610787.5">
    <molecule id="Q9NRY7-1"/>
    <property type="protein sequence ID" value="ENSP00000478044.1"/>
    <property type="gene ID" value="ENSG00000163746.13"/>
</dbReference>
<dbReference type="Ensembl" id="ENST00000613069.4">
    <molecule id="Q9NRY7-3"/>
    <property type="protein sequence ID" value="ENSP00000478902.1"/>
    <property type="gene ID" value="ENSG00000163746.13"/>
</dbReference>
<dbReference type="Ensembl" id="ENST00000696113.1">
    <molecule id="Q9NRY7-1"/>
    <property type="protein sequence ID" value="ENSP00000512407.1"/>
    <property type="gene ID" value="ENSG00000163746.13"/>
</dbReference>
<dbReference type="Ensembl" id="ENST00000696119.1">
    <molecule id="Q9NRY7-2"/>
    <property type="protein sequence ID" value="ENSP00000512413.1"/>
    <property type="gene ID" value="ENSG00000163746.13"/>
</dbReference>
<dbReference type="Ensembl" id="ENST00000696120.1">
    <molecule id="Q9NRY7-1"/>
    <property type="protein sequence ID" value="ENSP00000512414.1"/>
    <property type="gene ID" value="ENSG00000163746.13"/>
</dbReference>
<dbReference type="GeneID" id="57047"/>
<dbReference type="KEGG" id="hsa:57047"/>
<dbReference type="MANE-Select" id="ENST00000696113.1">
    <molecule id="Q9NRY7-1"/>
    <property type="protein sequence ID" value="ENSP00000512407.1"/>
    <property type="RefSeq nucleotide sequence ID" value="NM_001395437.1"/>
    <property type="RefSeq protein sequence ID" value="NP_001382366.1"/>
</dbReference>
<dbReference type="UCSC" id="uc003evv.3">
    <molecule id="Q9NRY7-2"/>
    <property type="organism name" value="human"/>
</dbReference>
<dbReference type="AGR" id="HGNC:16494"/>
<dbReference type="CTD" id="57047"/>
<dbReference type="GeneCards" id="PLSCR2"/>
<dbReference type="HGNC" id="HGNC:16494">
    <property type="gene designation" value="PLSCR2"/>
</dbReference>
<dbReference type="HPA" id="ENSG00000163746">
    <property type="expression patterns" value="Tissue enriched (testis)"/>
</dbReference>
<dbReference type="MIM" id="607610">
    <property type="type" value="gene"/>
</dbReference>
<dbReference type="neXtProt" id="NX_Q9NRY7"/>
<dbReference type="OpenTargets" id="ENSG00000163746"/>
<dbReference type="PharmGKB" id="PA33420"/>
<dbReference type="VEuPathDB" id="HostDB:ENSG00000163746"/>
<dbReference type="eggNOG" id="KOG0621">
    <property type="taxonomic scope" value="Eukaryota"/>
</dbReference>
<dbReference type="GeneTree" id="ENSGT00940000164933"/>
<dbReference type="HOGENOM" id="CLU_053024_2_2_1"/>
<dbReference type="InParanoid" id="Q9NRY7"/>
<dbReference type="OMA" id="WHPLSPK"/>
<dbReference type="OrthoDB" id="191150at2759"/>
<dbReference type="PAN-GO" id="Q9NRY7">
    <property type="GO annotations" value="3 GO annotations based on evolutionary models"/>
</dbReference>
<dbReference type="PhylomeDB" id="Q9NRY7"/>
<dbReference type="TreeFam" id="TF314939"/>
<dbReference type="BRENDA" id="7.6.2.1">
    <property type="organism ID" value="2681"/>
</dbReference>
<dbReference type="PathwayCommons" id="Q9NRY7"/>
<dbReference type="SignaLink" id="Q9NRY7"/>
<dbReference type="BioGRID-ORCS" id="57047">
    <property type="hits" value="14 hits in 1137 CRISPR screens"/>
</dbReference>
<dbReference type="ChiTaRS" id="PLSCR2">
    <property type="organism name" value="human"/>
</dbReference>
<dbReference type="GeneWiki" id="PLSCR2"/>
<dbReference type="GenomeRNAi" id="57047"/>
<dbReference type="Pharos" id="Q9NRY7">
    <property type="development level" value="Tdark"/>
</dbReference>
<dbReference type="PRO" id="PR:Q9NRY7"/>
<dbReference type="Proteomes" id="UP000005640">
    <property type="component" value="Chromosome 3"/>
</dbReference>
<dbReference type="RNAct" id="Q9NRY7">
    <property type="molecule type" value="protein"/>
</dbReference>
<dbReference type="Bgee" id="ENSG00000163746">
    <property type="expression patterns" value="Expressed in sperm and 108 other cell types or tissues"/>
</dbReference>
<dbReference type="ExpressionAtlas" id="Q9NRY7">
    <property type="expression patterns" value="baseline and differential"/>
</dbReference>
<dbReference type="GO" id="GO:0005783">
    <property type="term" value="C:endoplasmic reticulum"/>
    <property type="evidence" value="ECO:0000314"/>
    <property type="project" value="HPA"/>
</dbReference>
<dbReference type="GO" id="GO:0043231">
    <property type="term" value="C:intracellular membrane-bounded organelle"/>
    <property type="evidence" value="ECO:0000314"/>
    <property type="project" value="HPA"/>
</dbReference>
<dbReference type="GO" id="GO:0005654">
    <property type="term" value="C:nucleoplasm"/>
    <property type="evidence" value="ECO:0000314"/>
    <property type="project" value="HPA"/>
</dbReference>
<dbReference type="GO" id="GO:0005634">
    <property type="term" value="C:nucleus"/>
    <property type="evidence" value="ECO:0000314"/>
    <property type="project" value="UniProtKB"/>
</dbReference>
<dbReference type="GO" id="GO:0005886">
    <property type="term" value="C:plasma membrane"/>
    <property type="evidence" value="ECO:0000318"/>
    <property type="project" value="GO_Central"/>
</dbReference>
<dbReference type="GO" id="GO:0005509">
    <property type="term" value="F:calcium ion binding"/>
    <property type="evidence" value="ECO:0000303"/>
    <property type="project" value="UniProtKB"/>
</dbReference>
<dbReference type="GO" id="GO:0017128">
    <property type="term" value="F:phospholipid scramblase activity"/>
    <property type="evidence" value="ECO:0000314"/>
    <property type="project" value="UniProtKB"/>
</dbReference>
<dbReference type="GO" id="GO:0017121">
    <property type="term" value="P:plasma membrane phospholipid scrambling"/>
    <property type="evidence" value="ECO:0000314"/>
    <property type="project" value="UniProtKB"/>
</dbReference>
<dbReference type="InterPro" id="IPR005552">
    <property type="entry name" value="Scramblase"/>
</dbReference>
<dbReference type="PANTHER" id="PTHR23248:SF29">
    <property type="entry name" value="PHOSPHOLIPID SCRAMBLASE 2"/>
    <property type="match status" value="1"/>
</dbReference>
<dbReference type="PANTHER" id="PTHR23248">
    <property type="entry name" value="PHOSPHOLIPID SCRAMBLASE-RELATED"/>
    <property type="match status" value="1"/>
</dbReference>
<dbReference type="Pfam" id="PF03803">
    <property type="entry name" value="Scramblase"/>
    <property type="match status" value="1"/>
</dbReference>
<gene>
    <name evidence="9" type="primary">PLSCR2</name>
</gene>